<proteinExistence type="inferred from homology"/>
<gene>
    <name evidence="1" type="primary">tagU</name>
    <name type="ordered locus">EF_1212</name>
</gene>
<reference key="1">
    <citation type="journal article" date="2003" name="Science">
        <title>Role of mobile DNA in the evolution of vancomycin-resistant Enterococcus faecalis.</title>
        <authorList>
            <person name="Paulsen I.T."/>
            <person name="Banerjei L."/>
            <person name="Myers G.S.A."/>
            <person name="Nelson K.E."/>
            <person name="Seshadri R."/>
            <person name="Read T.D."/>
            <person name="Fouts D.E."/>
            <person name="Eisen J.A."/>
            <person name="Gill S.R."/>
            <person name="Heidelberg J.F."/>
            <person name="Tettelin H."/>
            <person name="Dodson R.J."/>
            <person name="Umayam L.A."/>
            <person name="Brinkac L.M."/>
            <person name="Beanan M.J."/>
            <person name="Daugherty S.C."/>
            <person name="DeBoy R.T."/>
            <person name="Durkin S.A."/>
            <person name="Kolonay J.F."/>
            <person name="Madupu R."/>
            <person name="Nelson W.C."/>
            <person name="Vamathevan J.J."/>
            <person name="Tran B."/>
            <person name="Upton J."/>
            <person name="Hansen T."/>
            <person name="Shetty J."/>
            <person name="Khouri H.M."/>
            <person name="Utterback T.R."/>
            <person name="Radune D."/>
            <person name="Ketchum K.A."/>
            <person name="Dougherty B.A."/>
            <person name="Fraser C.M."/>
        </authorList>
    </citation>
    <scope>NUCLEOTIDE SEQUENCE [LARGE SCALE GENOMIC DNA]</scope>
    <source>
        <strain>ATCC 700802 / V583</strain>
    </source>
</reference>
<organism>
    <name type="scientific">Enterococcus faecalis (strain ATCC 700802 / V583)</name>
    <dbReference type="NCBI Taxonomy" id="226185"/>
    <lineage>
        <taxon>Bacteria</taxon>
        <taxon>Bacillati</taxon>
        <taxon>Bacillota</taxon>
        <taxon>Bacilli</taxon>
        <taxon>Lactobacillales</taxon>
        <taxon>Enterococcaceae</taxon>
        <taxon>Enterococcus</taxon>
    </lineage>
</organism>
<sequence length="303" mass="33855">MSKGKKIFAIIFGIILVLFLAVVGMGAKLYWDVSKSMDKTYETVERSKKSQVNLNNKEPFSVLLLGIDTGDDGRVEQGRSDTTIVATVNPRDKQTTLVSLARDTYVDIPGQGKQDKLNHAYAFGGASLAMDTVENYLNIPINHYVSINMAGLKELVNAVGGIEVNNNLTFSQDGYDFTIGKISLDGEQALSYSRMRYEDPNGDYGRQERQRKVIEGIVQKVLSLNSVSNYQEILTAVSDNMKTDLSFDDMKKIALDYRSAFGKVKQDQLQGTGFMQDGVSYQRVDEQELTRVQQELKNQLNTK</sequence>
<protein>
    <recommendedName>
        <fullName evidence="1">Polyisoprenyl-teichoic acid--peptidoglycan teichoic acid transferase TagU</fullName>
        <ecNumber evidence="1">2.7.8.-</ecNumber>
    </recommendedName>
</protein>
<keyword id="KW-1003">Cell membrane</keyword>
<keyword id="KW-0961">Cell wall biogenesis/degradation</keyword>
<keyword id="KW-0472">Membrane</keyword>
<keyword id="KW-1185">Reference proteome</keyword>
<keyword id="KW-0735">Signal-anchor</keyword>
<keyword id="KW-0808">Transferase</keyword>
<keyword id="KW-0812">Transmembrane</keyword>
<keyword id="KW-1133">Transmembrane helix</keyword>
<comment type="function">
    <text evidence="1">May catalyze the final step in cell wall teichoic acid biosynthesis, the transfer of the anionic cell wall polymers (APs) from their lipid-linked precursor to the cell wall peptidoglycan (PG).</text>
</comment>
<comment type="pathway">
    <text evidence="1">Cell wall biogenesis.</text>
</comment>
<comment type="subcellular location">
    <subcellularLocation>
        <location evidence="1">Cell membrane</location>
        <topology evidence="1">Single-pass type II membrane protein</topology>
    </subcellularLocation>
</comment>
<comment type="similarity">
    <text evidence="1">Belongs to the LytR/CpsA/Psr (LCP) family.</text>
</comment>
<accession>Q836A6</accession>
<dbReference type="EC" id="2.7.8.-" evidence="1"/>
<dbReference type="EMBL" id="AE016830">
    <property type="protein sequence ID" value="AAO81009.1"/>
    <property type="molecule type" value="Genomic_DNA"/>
</dbReference>
<dbReference type="RefSeq" id="NP_814939.1">
    <property type="nucleotide sequence ID" value="NC_004668.1"/>
</dbReference>
<dbReference type="RefSeq" id="WP_002385983.1">
    <property type="nucleotide sequence ID" value="NZ_KE136528.1"/>
</dbReference>
<dbReference type="SMR" id="Q836A6"/>
<dbReference type="STRING" id="226185.EF_1212"/>
<dbReference type="DNASU" id="1200112"/>
<dbReference type="EnsemblBacteria" id="AAO81009">
    <property type="protein sequence ID" value="AAO81009"/>
    <property type="gene ID" value="EF_1212"/>
</dbReference>
<dbReference type="KEGG" id="efa:EF1212"/>
<dbReference type="PATRIC" id="fig|226185.45.peg.2287"/>
<dbReference type="eggNOG" id="COG1316">
    <property type="taxonomic scope" value="Bacteria"/>
</dbReference>
<dbReference type="HOGENOM" id="CLU_016455_2_2_9"/>
<dbReference type="Proteomes" id="UP000001415">
    <property type="component" value="Chromosome"/>
</dbReference>
<dbReference type="GO" id="GO:0005886">
    <property type="term" value="C:plasma membrane"/>
    <property type="evidence" value="ECO:0007669"/>
    <property type="project" value="UniProtKB-SubCell"/>
</dbReference>
<dbReference type="GO" id="GO:0016780">
    <property type="term" value="F:phosphotransferase activity, for other substituted phosphate groups"/>
    <property type="evidence" value="ECO:0007669"/>
    <property type="project" value="UniProtKB-UniRule"/>
</dbReference>
<dbReference type="GO" id="GO:0070726">
    <property type="term" value="P:cell wall assembly"/>
    <property type="evidence" value="ECO:0007669"/>
    <property type="project" value="UniProtKB-UniRule"/>
</dbReference>
<dbReference type="Gene3D" id="3.40.630.190">
    <property type="entry name" value="LCP protein"/>
    <property type="match status" value="1"/>
</dbReference>
<dbReference type="HAMAP" id="MF_01140">
    <property type="entry name" value="TagU_transferase"/>
    <property type="match status" value="1"/>
</dbReference>
<dbReference type="InterPro" id="IPR050922">
    <property type="entry name" value="LytR/CpsA/Psr_CW_biosynth"/>
</dbReference>
<dbReference type="InterPro" id="IPR004474">
    <property type="entry name" value="LytR_CpsA_psr"/>
</dbReference>
<dbReference type="InterPro" id="IPR023734">
    <property type="entry name" value="TagU"/>
</dbReference>
<dbReference type="NCBIfam" id="TIGR00350">
    <property type="entry name" value="lytR_cpsA_psr"/>
    <property type="match status" value="1"/>
</dbReference>
<dbReference type="PANTHER" id="PTHR33392">
    <property type="entry name" value="POLYISOPRENYL-TEICHOIC ACID--PEPTIDOGLYCAN TEICHOIC ACID TRANSFERASE TAGU"/>
    <property type="match status" value="1"/>
</dbReference>
<dbReference type="PANTHER" id="PTHR33392:SF6">
    <property type="entry name" value="POLYISOPRENYL-TEICHOIC ACID--PEPTIDOGLYCAN TEICHOIC ACID TRANSFERASE TAGU"/>
    <property type="match status" value="1"/>
</dbReference>
<dbReference type="Pfam" id="PF03816">
    <property type="entry name" value="LytR_cpsA_psr"/>
    <property type="match status" value="1"/>
</dbReference>
<name>TAGU_ENTFA</name>
<evidence type="ECO:0000255" key="1">
    <source>
        <dbReference type="HAMAP-Rule" id="MF_01140"/>
    </source>
</evidence>
<feature type="chain" id="PRO_0000218499" description="Polyisoprenyl-teichoic acid--peptidoglycan teichoic acid transferase TagU">
    <location>
        <begin position="1"/>
        <end position="303"/>
    </location>
</feature>
<feature type="topological domain" description="Cytoplasmic" evidence="1">
    <location>
        <begin position="1"/>
        <end position="6"/>
    </location>
</feature>
<feature type="transmembrane region" description="Helical; Signal-anchor for type II membrane protein" evidence="1">
    <location>
        <begin position="7"/>
        <end position="27"/>
    </location>
</feature>
<feature type="topological domain" description="Extracellular" evidence="1">
    <location>
        <begin position="28"/>
        <end position="303"/>
    </location>
</feature>